<organism evidence="10">
    <name type="scientific">Arabidopsis thaliana</name>
    <name type="common">Mouse-ear cress</name>
    <dbReference type="NCBI Taxonomy" id="3702"/>
    <lineage>
        <taxon>Eukaryota</taxon>
        <taxon>Viridiplantae</taxon>
        <taxon>Streptophyta</taxon>
        <taxon>Embryophyta</taxon>
        <taxon>Tracheophyta</taxon>
        <taxon>Spermatophyta</taxon>
        <taxon>Magnoliopsida</taxon>
        <taxon>eudicotyledons</taxon>
        <taxon>Gunneridae</taxon>
        <taxon>Pentapetalae</taxon>
        <taxon>rosids</taxon>
        <taxon>malvids</taxon>
        <taxon>Brassicales</taxon>
        <taxon>Brassicaceae</taxon>
        <taxon>Camelineae</taxon>
        <taxon>Arabidopsis</taxon>
    </lineage>
</organism>
<comment type="function">
    <text evidence="1 4">Catalyzes the oxidation of L-gulono-1,4-lactone to ascorbic acid (PubMed:20622436). L-gulono-1,4-lactone is oxidized to hydrogen peroxide and L-xylo-hexulonolactone which spontaneously isomerizes to L-ascorbate (By similarity).</text>
</comment>
<comment type="catalytic activity">
    <reaction evidence="4">
        <text>L-gulono-1,4-lactone + O2 = L-ascorbate + H2O2 + H(+)</text>
        <dbReference type="Rhea" id="RHEA:32363"/>
        <dbReference type="ChEBI" id="CHEBI:15378"/>
        <dbReference type="ChEBI" id="CHEBI:15379"/>
        <dbReference type="ChEBI" id="CHEBI:16240"/>
        <dbReference type="ChEBI" id="CHEBI:17587"/>
        <dbReference type="ChEBI" id="CHEBI:38290"/>
        <dbReference type="EC" id="1.1.3.8"/>
    </reaction>
</comment>
<comment type="cofactor">
    <cofactor evidence="1">
        <name>FAD</name>
        <dbReference type="ChEBI" id="CHEBI:57692"/>
    </cofactor>
</comment>
<comment type="pathway">
    <text evidence="4">Cofactor biosynthesis; L-ascorbate biosynthesis.</text>
</comment>
<comment type="subcellular location">
    <subcellularLocation>
        <location evidence="7">Vacuole</location>
    </subcellularLocation>
</comment>
<comment type="similarity">
    <text evidence="6">Belongs to the oxygen-dependent FAD-linked oxidoreductase family.</text>
</comment>
<dbReference type="EC" id="1.1.3.8" evidence="4"/>
<dbReference type="EMBL" id="AL163815">
    <property type="protein sequence ID" value="CAB87714.1"/>
    <property type="molecule type" value="Genomic_DNA"/>
</dbReference>
<dbReference type="EMBL" id="CP002688">
    <property type="protein sequence ID" value="AED91693.1"/>
    <property type="molecule type" value="Genomic_DNA"/>
</dbReference>
<dbReference type="PIR" id="T48513">
    <property type="entry name" value="T48513"/>
</dbReference>
<dbReference type="RefSeq" id="NP_196715.1">
    <property type="nucleotide sequence ID" value="NM_121192.2"/>
</dbReference>
<dbReference type="SMR" id="Q9LYD8"/>
<dbReference type="FunCoup" id="Q9LYD8">
    <property type="interactions" value="343"/>
</dbReference>
<dbReference type="STRING" id="3702.Q9LYD8"/>
<dbReference type="PaxDb" id="3702-AT5G11540.1"/>
<dbReference type="ProteomicsDB" id="224779"/>
<dbReference type="EnsemblPlants" id="AT5G11540.1">
    <property type="protein sequence ID" value="AT5G11540.1"/>
    <property type="gene ID" value="AT5G11540"/>
</dbReference>
<dbReference type="GeneID" id="831026"/>
<dbReference type="Gramene" id="AT5G11540.1">
    <property type="protein sequence ID" value="AT5G11540.1"/>
    <property type="gene ID" value="AT5G11540"/>
</dbReference>
<dbReference type="KEGG" id="ath:AT5G11540"/>
<dbReference type="Araport" id="AT5G11540"/>
<dbReference type="TAIR" id="AT5G11540">
    <property type="gene designation" value="GULLO3"/>
</dbReference>
<dbReference type="eggNOG" id="KOG4730">
    <property type="taxonomic scope" value="Eukaryota"/>
</dbReference>
<dbReference type="HOGENOM" id="CLU_019762_2_0_1"/>
<dbReference type="InParanoid" id="Q9LYD8"/>
<dbReference type="OMA" id="YGMISPY"/>
<dbReference type="PhylomeDB" id="Q9LYD8"/>
<dbReference type="BioCyc" id="ARA:AT5G11540-MONOMER"/>
<dbReference type="BioCyc" id="MetaCyc:GQT-4735-MONOMER"/>
<dbReference type="BRENDA" id="1.1.3.37">
    <property type="organism ID" value="399"/>
</dbReference>
<dbReference type="BRENDA" id="1.1.3.8">
    <property type="organism ID" value="399"/>
</dbReference>
<dbReference type="UniPathway" id="UPA00132"/>
<dbReference type="PRO" id="PR:Q9LYD8"/>
<dbReference type="Proteomes" id="UP000006548">
    <property type="component" value="Chromosome 5"/>
</dbReference>
<dbReference type="ExpressionAtlas" id="Q9LYD8">
    <property type="expression patterns" value="baseline and differential"/>
</dbReference>
<dbReference type="GO" id="GO:0016020">
    <property type="term" value="C:membrane"/>
    <property type="evidence" value="ECO:0007669"/>
    <property type="project" value="InterPro"/>
</dbReference>
<dbReference type="GO" id="GO:0005773">
    <property type="term" value="C:vacuole"/>
    <property type="evidence" value="ECO:0007669"/>
    <property type="project" value="UniProtKB-SubCell"/>
</dbReference>
<dbReference type="GO" id="GO:0003885">
    <property type="term" value="F:D-arabinono-1,4-lactone oxidase activity"/>
    <property type="evidence" value="ECO:0007669"/>
    <property type="project" value="InterPro"/>
</dbReference>
<dbReference type="GO" id="GO:0071949">
    <property type="term" value="F:FAD binding"/>
    <property type="evidence" value="ECO:0007669"/>
    <property type="project" value="InterPro"/>
</dbReference>
<dbReference type="GO" id="GO:0050105">
    <property type="term" value="F:L-gulonolactone oxidase activity"/>
    <property type="evidence" value="ECO:0000315"/>
    <property type="project" value="TAIR"/>
</dbReference>
<dbReference type="GO" id="GO:0019853">
    <property type="term" value="P:L-ascorbic acid biosynthetic process"/>
    <property type="evidence" value="ECO:0000315"/>
    <property type="project" value="TAIR"/>
</dbReference>
<dbReference type="FunFam" id="3.30.70.2520:FF:000003">
    <property type="entry name" value="L-gulonolactone oxidase 2"/>
    <property type="match status" value="1"/>
</dbReference>
<dbReference type="FunFam" id="3.30.465.10:FF:000033">
    <property type="entry name" value="L-gulonolactone oxidase 5"/>
    <property type="match status" value="1"/>
</dbReference>
<dbReference type="Gene3D" id="3.30.465.10">
    <property type="match status" value="1"/>
</dbReference>
<dbReference type="Gene3D" id="3.30.70.2520">
    <property type="match status" value="1"/>
</dbReference>
<dbReference type="Gene3D" id="3.30.43.10">
    <property type="entry name" value="Uridine Diphospho-n-acetylenolpyruvylglucosamine Reductase, domain 2"/>
    <property type="match status" value="1"/>
</dbReference>
<dbReference type="InterPro" id="IPR007173">
    <property type="entry name" value="ALO_C"/>
</dbReference>
<dbReference type="InterPro" id="IPR016166">
    <property type="entry name" value="FAD-bd_PCMH"/>
</dbReference>
<dbReference type="InterPro" id="IPR036318">
    <property type="entry name" value="FAD-bd_PCMH-like_sf"/>
</dbReference>
<dbReference type="InterPro" id="IPR016167">
    <property type="entry name" value="FAD-bd_PCMH_sub1"/>
</dbReference>
<dbReference type="InterPro" id="IPR016169">
    <property type="entry name" value="FAD-bd_PCMH_sub2"/>
</dbReference>
<dbReference type="InterPro" id="IPR050432">
    <property type="entry name" value="FAD-linked_Oxidoreductases_BP"/>
</dbReference>
<dbReference type="InterPro" id="IPR055154">
    <property type="entry name" value="GULLO2-like_C"/>
</dbReference>
<dbReference type="InterPro" id="IPR010030">
    <property type="entry name" value="GULO_Plant"/>
</dbReference>
<dbReference type="InterPro" id="IPR006094">
    <property type="entry name" value="Oxid_FAD_bind_N"/>
</dbReference>
<dbReference type="NCBIfam" id="TIGR01677">
    <property type="entry name" value="pln_FAD_oxido"/>
    <property type="match status" value="1"/>
</dbReference>
<dbReference type="PANTHER" id="PTHR13878">
    <property type="entry name" value="GULONOLACTONE OXIDASE"/>
    <property type="match status" value="1"/>
</dbReference>
<dbReference type="PANTHER" id="PTHR13878:SF125">
    <property type="entry name" value="L-GULONOLACTONE OXIDASE 3"/>
    <property type="match status" value="1"/>
</dbReference>
<dbReference type="Pfam" id="PF04030">
    <property type="entry name" value="ALO"/>
    <property type="match status" value="1"/>
</dbReference>
<dbReference type="Pfam" id="PF01565">
    <property type="entry name" value="FAD_binding_4"/>
    <property type="match status" value="1"/>
</dbReference>
<dbReference type="Pfam" id="PF22906">
    <property type="entry name" value="GULLO2-like_3rd"/>
    <property type="match status" value="1"/>
</dbReference>
<dbReference type="SUPFAM" id="SSF56176">
    <property type="entry name" value="FAD-binding/transporter-associated domain-like"/>
    <property type="match status" value="1"/>
</dbReference>
<dbReference type="PROSITE" id="PS51387">
    <property type="entry name" value="FAD_PCMH"/>
    <property type="match status" value="1"/>
</dbReference>
<reference key="1">
    <citation type="journal article" date="2000" name="Nature">
        <title>Sequence and analysis of chromosome 5 of the plant Arabidopsis thaliana.</title>
        <authorList>
            <person name="Tabata S."/>
            <person name="Kaneko T."/>
            <person name="Nakamura Y."/>
            <person name="Kotani H."/>
            <person name="Kato T."/>
            <person name="Asamizu E."/>
            <person name="Miyajima N."/>
            <person name="Sasamoto S."/>
            <person name="Kimura T."/>
            <person name="Hosouchi T."/>
            <person name="Kawashima K."/>
            <person name="Kohara M."/>
            <person name="Matsumoto M."/>
            <person name="Matsuno A."/>
            <person name="Muraki A."/>
            <person name="Nakayama S."/>
            <person name="Nakazaki N."/>
            <person name="Naruo K."/>
            <person name="Okumura S."/>
            <person name="Shinpo S."/>
            <person name="Takeuchi C."/>
            <person name="Wada T."/>
            <person name="Watanabe A."/>
            <person name="Yamada M."/>
            <person name="Yasuda M."/>
            <person name="Sato S."/>
            <person name="de la Bastide M."/>
            <person name="Huang E."/>
            <person name="Spiegel L."/>
            <person name="Gnoj L."/>
            <person name="O'Shaughnessy A."/>
            <person name="Preston R."/>
            <person name="Habermann K."/>
            <person name="Murray J."/>
            <person name="Johnson D."/>
            <person name="Rohlfing T."/>
            <person name="Nelson J."/>
            <person name="Stoneking T."/>
            <person name="Pepin K."/>
            <person name="Spieth J."/>
            <person name="Sekhon M."/>
            <person name="Armstrong J."/>
            <person name="Becker M."/>
            <person name="Belter E."/>
            <person name="Cordum H."/>
            <person name="Cordes M."/>
            <person name="Courtney L."/>
            <person name="Courtney W."/>
            <person name="Dante M."/>
            <person name="Du H."/>
            <person name="Edwards J."/>
            <person name="Fryman J."/>
            <person name="Haakensen B."/>
            <person name="Lamar E."/>
            <person name="Latreille P."/>
            <person name="Leonard S."/>
            <person name="Meyer R."/>
            <person name="Mulvaney E."/>
            <person name="Ozersky P."/>
            <person name="Riley A."/>
            <person name="Strowmatt C."/>
            <person name="Wagner-McPherson C."/>
            <person name="Wollam A."/>
            <person name="Yoakum M."/>
            <person name="Bell M."/>
            <person name="Dedhia N."/>
            <person name="Parnell L."/>
            <person name="Shah R."/>
            <person name="Rodriguez M."/>
            <person name="Hoon See L."/>
            <person name="Vil D."/>
            <person name="Baker J."/>
            <person name="Kirchoff K."/>
            <person name="Toth K."/>
            <person name="King L."/>
            <person name="Bahret A."/>
            <person name="Miller B."/>
            <person name="Marra M.A."/>
            <person name="Martienssen R."/>
            <person name="McCombie W.R."/>
            <person name="Wilson R.K."/>
            <person name="Murphy G."/>
            <person name="Bancroft I."/>
            <person name="Volckaert G."/>
            <person name="Wambutt R."/>
            <person name="Duesterhoeft A."/>
            <person name="Stiekema W."/>
            <person name="Pohl T."/>
            <person name="Entian K.-D."/>
            <person name="Terryn N."/>
            <person name="Hartley N."/>
            <person name="Bent E."/>
            <person name="Johnson S."/>
            <person name="Langham S.-A."/>
            <person name="McCullagh B."/>
            <person name="Robben J."/>
            <person name="Grymonprez B."/>
            <person name="Zimmermann W."/>
            <person name="Ramsperger U."/>
            <person name="Wedler H."/>
            <person name="Balke K."/>
            <person name="Wedler E."/>
            <person name="Peters S."/>
            <person name="van Staveren M."/>
            <person name="Dirkse W."/>
            <person name="Mooijman P."/>
            <person name="Klein Lankhorst R."/>
            <person name="Weitzenegger T."/>
            <person name="Bothe G."/>
            <person name="Rose M."/>
            <person name="Hauf J."/>
            <person name="Berneiser S."/>
            <person name="Hempel S."/>
            <person name="Feldpausch M."/>
            <person name="Lamberth S."/>
            <person name="Villarroel R."/>
            <person name="Gielen J."/>
            <person name="Ardiles W."/>
            <person name="Bents O."/>
            <person name="Lemcke K."/>
            <person name="Kolesov G."/>
            <person name="Mayer K.F.X."/>
            <person name="Rudd S."/>
            <person name="Schoof H."/>
            <person name="Schueller C."/>
            <person name="Zaccaria P."/>
            <person name="Mewes H.-W."/>
            <person name="Bevan M."/>
            <person name="Fransz P.F."/>
        </authorList>
    </citation>
    <scope>NUCLEOTIDE SEQUENCE [LARGE SCALE GENOMIC DNA]</scope>
    <source>
        <strain>cv. Columbia</strain>
    </source>
</reference>
<reference key="2">
    <citation type="journal article" date="2017" name="Plant J.">
        <title>Araport11: a complete reannotation of the Arabidopsis thaliana reference genome.</title>
        <authorList>
            <person name="Cheng C.Y."/>
            <person name="Krishnakumar V."/>
            <person name="Chan A.P."/>
            <person name="Thibaud-Nissen F."/>
            <person name="Schobel S."/>
            <person name="Town C.D."/>
        </authorList>
    </citation>
    <scope>GENOME REANNOTATION</scope>
    <source>
        <strain>cv. Columbia</strain>
    </source>
</reference>
<reference key="3">
    <citation type="journal article" date="2010" name="Biosci. Biotechnol. Biochem.">
        <title>The contribution of Arabidopsis homologs of L-gulono-1,4-lactone oxidase to the biosynthesis of ascorbic acid.</title>
        <authorList>
            <person name="Maruta T."/>
            <person name="Ichikawa Y."/>
            <person name="Mieda T."/>
            <person name="Takeda T."/>
            <person name="Tamoi M."/>
            <person name="Yabuta Y."/>
            <person name="Ishikawa T."/>
            <person name="Shigeoka S."/>
        </authorList>
    </citation>
    <scope>FUNCTION</scope>
    <scope>CATALYTIC ACTIVITY</scope>
</reference>
<reference key="4">
    <citation type="journal article" date="2013" name="Plant J.">
        <title>An in vivo expression system for the identification of cargo proteins of vacuolar sorting receptors in Arabidopsis culture cells.</title>
        <authorList>
            <person name="Shen J."/>
            <person name="Suen P.K."/>
            <person name="Wang X."/>
            <person name="Lin Y."/>
            <person name="Lo S.W."/>
            <person name="Rojo E."/>
            <person name="Jiang L."/>
        </authorList>
    </citation>
    <scope>SUBCELLULAR LOCATION</scope>
</reference>
<proteinExistence type="evidence at protein level"/>
<keyword id="KW-0060">Ascorbate biosynthesis</keyword>
<keyword id="KW-0274">FAD</keyword>
<keyword id="KW-0285">Flavoprotein</keyword>
<keyword id="KW-0560">Oxidoreductase</keyword>
<keyword id="KW-1185">Reference proteome</keyword>
<keyword id="KW-0732">Signal</keyword>
<keyword id="KW-0926">Vacuole</keyword>
<accession>Q9LYD8</accession>
<gene>
    <name evidence="5" type="primary">GULLO3</name>
    <name evidence="8" type="ordered locus">At5g11540</name>
    <name evidence="9" type="ORF">F15N18.130</name>
</gene>
<feature type="signal peptide" evidence="2">
    <location>
        <begin position="1"/>
        <end position="24"/>
    </location>
</feature>
<feature type="chain" id="PRO_0000432504" description="L-gulonolactone oxidase 3" evidence="2">
    <location>
        <begin position="25"/>
        <end position="585"/>
    </location>
</feature>
<feature type="domain" description="FAD-binding PCMH-type" evidence="3">
    <location>
        <begin position="51"/>
        <end position="233"/>
    </location>
</feature>
<sequence length="585" mass="64961">MRYSHTLQQFSILSFFVTIWTVQSVPPQPPIRCDQTGCTVSNAYGTWPDRKTCHAANVTYPTTEEDLRKAVAYAAEHNLKVKTVTKFSHTIPKLACPSGSDALLISTSKYNSVIEIEPELLTVTADSGVSLRELIEKVEGAGFSIGTSPYWEGVSIGGLISTGSHGSSWSGRGGSVHDHVVGISLVVPANQSEGFAKVVRLEEGRDDTLLNAVKVSLGVLGVISKVKLSIEKAFKRSVTYNFTSDVALEDIFMEHGKKYEFGDITWYPSRKTAVYRYDIRAPVNVSGNGVNDFLGFQSNPILISKGVRALEKGFESSKNENGKCTTADTTLAYKKLIGNGLKNSGLIFTGYPVIGRQGKIQTSGSCLYSSSIRIDVACAWDPRYNGLFFYETTAIFPVSRFRDFLLDVKKLRDMKPERLCGIDIYNGIFIRFIKGSKAYLGQTEDSVVIDFNYYRADDELTPRLNQDVMEEMEQMAFVKHGAKPHWGKNRKVGFFGVKQKIGPNFDKFLEVKNKLDPKKMFSSEWSDEILLGTEASKYDGCALEGNCVCSEERHCNPSKGYFCKEGLVYTQARVCRFSPAQVIVM</sequence>
<name>GGLO3_ARATH</name>
<protein>
    <recommendedName>
        <fullName evidence="5">L-gulonolactone oxidase 3</fullName>
        <shortName evidence="5">AtGulLO3</shortName>
        <ecNumber evidence="4">1.1.3.8</ecNumber>
    </recommendedName>
</protein>
<evidence type="ECO:0000250" key="1">
    <source>
        <dbReference type="UniProtKB" id="P58710"/>
    </source>
</evidence>
<evidence type="ECO:0000255" key="2"/>
<evidence type="ECO:0000255" key="3">
    <source>
        <dbReference type="PROSITE-ProRule" id="PRU00718"/>
    </source>
</evidence>
<evidence type="ECO:0000269" key="4">
    <source>
    </source>
</evidence>
<evidence type="ECO:0000303" key="5">
    <source>
    </source>
</evidence>
<evidence type="ECO:0000305" key="6"/>
<evidence type="ECO:0000305" key="7">
    <source>
    </source>
</evidence>
<evidence type="ECO:0000312" key="8">
    <source>
        <dbReference type="Araport" id="AT5G11540"/>
    </source>
</evidence>
<evidence type="ECO:0000312" key="9">
    <source>
        <dbReference type="EMBL" id="CAB87714.1"/>
    </source>
</evidence>
<evidence type="ECO:0000312" key="10">
    <source>
        <dbReference type="Proteomes" id="UP000006548"/>
    </source>
</evidence>